<evidence type="ECO:0000250" key="1">
    <source>
        <dbReference type="UniProtKB" id="P02768"/>
    </source>
</evidence>
<evidence type="ECO:0000250" key="2">
    <source>
        <dbReference type="UniProtKB" id="P02769"/>
    </source>
</evidence>
<evidence type="ECO:0000250" key="3">
    <source>
        <dbReference type="UniProtKB" id="P02770"/>
    </source>
</evidence>
<evidence type="ECO:0000250" key="4">
    <source>
        <dbReference type="UniProtKB" id="P07724"/>
    </source>
</evidence>
<evidence type="ECO:0000255" key="5"/>
<evidence type="ECO:0000255" key="6">
    <source>
        <dbReference type="PROSITE-ProRule" id="PRU00769"/>
    </source>
</evidence>
<evidence type="ECO:0007829" key="7">
    <source>
        <dbReference type="PDB" id="4LUH"/>
    </source>
</evidence>
<evidence type="ECO:0007829" key="8">
    <source>
        <dbReference type="PDB" id="5ORF"/>
    </source>
</evidence>
<evidence type="ECO:0007829" key="9">
    <source>
        <dbReference type="PDB" id="6HN0"/>
    </source>
</evidence>
<proteinExistence type="evidence at protein level"/>
<reference key="1">
    <citation type="journal article" date="1989" name="Nucleic Acids Res.">
        <title>Nucleotide and deduced amino acid sequence of sheep serum albumin.</title>
        <authorList>
            <person name="Brown W.M."/>
            <person name="Dziegielewska K.M."/>
            <person name="Foreman R.C."/>
            <person name="Saunders N.R."/>
        </authorList>
    </citation>
    <scope>NUCLEOTIDE SEQUENCE [MRNA]</scope>
    <source>
        <tissue>Liver</tissue>
    </source>
</reference>
<keyword id="KW-0002">3D-structure</keyword>
<keyword id="KW-0106">Calcium</keyword>
<keyword id="KW-0165">Cleavage on pair of basic residues</keyword>
<keyword id="KW-0186">Copper</keyword>
<keyword id="KW-1015">Disulfide bond</keyword>
<keyword id="KW-0446">Lipid-binding</keyword>
<keyword id="KW-0479">Metal-binding</keyword>
<keyword id="KW-0488">Methylation</keyword>
<keyword id="KW-0597">Phosphoprotein</keyword>
<keyword id="KW-1185">Reference proteome</keyword>
<keyword id="KW-0677">Repeat</keyword>
<keyword id="KW-0964">Secreted</keyword>
<keyword id="KW-0732">Signal</keyword>
<keyword id="KW-0862">Zinc</keyword>
<comment type="function">
    <text evidence="1 2">Binds water, Ca(2+), Na(+), K(+), fatty acids, hormones, bilirubin and drugs. Its main function is the regulation of the colloidal osmotic pressure of blood. Major zinc transporter in plasma, typically binds about 80% of all plasma zinc (By similarity). Major calcium and magnesium transporter in plasma, binds approximately 45% of circulating calcium and magnesium in plasma (By similarity). Potentially has more than two calcium-binding sites and might additionally bind calcium in a non-specific manner (By similarity). The shared binding site between zinc and calcium at residue Asp-272 suggests a crosstalk between zinc and calcium transport in the blood (By similarity). The rank order of affinity is zinc &gt; calcium &gt; magnesium (By similarity). Binds to the bacterial siderophore enterobactin and inhibits enterobactin-mediated iron uptake of E.coli from ferric transferrin, and may thereby limit the utilization of iron and growth of enteric bacteria such as E.coli (By similarity). Does not prevent iron uptake by the bacterial siderophore aerobactin (By similarity).</text>
</comment>
<comment type="subunit">
    <text evidence="1 4">Interacts with FCGRT; this interaction regulates ALB homeostasis (By similarity). Interacts with TASOR (By similarity). In plasma, occurs in a covalently-linked complex with chromophore-bound alpha-1-microglobulin; this interaction does not prevent fatty acid binding to ALB.</text>
</comment>
<comment type="subcellular location">
    <subcellularLocation>
        <location>Secreted</location>
    </subcellularLocation>
</comment>
<comment type="tissue specificity">
    <text>Plasma.</text>
</comment>
<comment type="PTM">
    <text evidence="1">Phosphorylated by FAM20C in the extracellular medium.</text>
</comment>
<comment type="similarity">
    <text evidence="6">Belongs to the ALB/AFP/VDB family.</text>
</comment>
<name>ALBU_SHEEP</name>
<protein>
    <recommendedName>
        <fullName>Albumin</fullName>
    </recommendedName>
</protein>
<dbReference type="EMBL" id="X17055">
    <property type="protein sequence ID" value="CAA34903.1"/>
    <property type="molecule type" value="mRNA"/>
</dbReference>
<dbReference type="PIR" id="S06936">
    <property type="entry name" value="ABSHS"/>
</dbReference>
<dbReference type="RefSeq" id="NP_001009376.1">
    <property type="nucleotide sequence ID" value="NM_001009376.1"/>
</dbReference>
<dbReference type="PDB" id="4LUF">
    <property type="method" value="X-ray"/>
    <property type="resolution" value="2.30 A"/>
    <property type="chains" value="A=25-607"/>
</dbReference>
<dbReference type="PDB" id="4LUH">
    <property type="method" value="X-ray"/>
    <property type="resolution" value="2.20 A"/>
    <property type="chains" value="A=25-607"/>
</dbReference>
<dbReference type="PDB" id="5ORF">
    <property type="method" value="X-ray"/>
    <property type="resolution" value="2.54 A"/>
    <property type="chains" value="A/B/C/D=25-607"/>
</dbReference>
<dbReference type="PDB" id="6HN0">
    <property type="method" value="X-ray"/>
    <property type="resolution" value="2.12 A"/>
    <property type="chains" value="A=25-607"/>
</dbReference>
<dbReference type="PDBsum" id="4LUF"/>
<dbReference type="PDBsum" id="4LUH"/>
<dbReference type="PDBsum" id="5ORF"/>
<dbReference type="PDBsum" id="6HN0"/>
<dbReference type="SMR" id="P14639"/>
<dbReference type="STRING" id="9940.ENSOARP00000014782"/>
<dbReference type="Allergome" id="758">
    <property type="allergen name" value="Ovi a 6"/>
</dbReference>
<dbReference type="PaxDb" id="9940-ENSOARP00000014782"/>
<dbReference type="Ensembl" id="ENSOART00180059591">
    <property type="protein sequence ID" value="ENSOARP00180032095"/>
    <property type="gene ID" value="ENSOARG00180035357"/>
</dbReference>
<dbReference type="Ensembl" id="ENSOART00260017815">
    <property type="protein sequence ID" value="ENSOARP00260008976"/>
    <property type="gene ID" value="ENSOARG00260010958"/>
</dbReference>
<dbReference type="GeneID" id="443393"/>
<dbReference type="KEGG" id="oas:443393"/>
<dbReference type="CTD" id="213"/>
<dbReference type="eggNOG" id="ENOG502R7EA">
    <property type="taxonomic scope" value="Eukaryota"/>
</dbReference>
<dbReference type="OrthoDB" id="9875082at2759"/>
<dbReference type="EvolutionaryTrace" id="P14639"/>
<dbReference type="Proteomes" id="UP000002356">
    <property type="component" value="Unplaced"/>
</dbReference>
<dbReference type="GO" id="GO:0072562">
    <property type="term" value="C:blood microparticle"/>
    <property type="evidence" value="ECO:0007669"/>
    <property type="project" value="TreeGrafter"/>
</dbReference>
<dbReference type="GO" id="GO:0005737">
    <property type="term" value="C:cytoplasm"/>
    <property type="evidence" value="ECO:0007669"/>
    <property type="project" value="TreeGrafter"/>
</dbReference>
<dbReference type="GO" id="GO:1903981">
    <property type="term" value="F:enterobactin binding"/>
    <property type="evidence" value="ECO:0000250"/>
    <property type="project" value="UniProtKB"/>
</dbReference>
<dbReference type="GO" id="GO:0008289">
    <property type="term" value="F:lipid binding"/>
    <property type="evidence" value="ECO:0007669"/>
    <property type="project" value="UniProtKB-KW"/>
</dbReference>
<dbReference type="GO" id="GO:0046872">
    <property type="term" value="F:metal ion binding"/>
    <property type="evidence" value="ECO:0007669"/>
    <property type="project" value="UniProtKB-KW"/>
</dbReference>
<dbReference type="CDD" id="cd00015">
    <property type="entry name" value="ALBUMIN"/>
    <property type="match status" value="3"/>
</dbReference>
<dbReference type="FunFam" id="1.10.246.10:FF:000001">
    <property type="entry name" value="Serum albumin"/>
    <property type="match status" value="2"/>
</dbReference>
<dbReference type="FunFam" id="1.10.246.10:FF:000002">
    <property type="entry name" value="Serum albumin"/>
    <property type="match status" value="2"/>
</dbReference>
<dbReference type="FunFam" id="1.10.246.10:FF:000003">
    <property type="entry name" value="Serum albumin"/>
    <property type="match status" value="1"/>
</dbReference>
<dbReference type="FunFam" id="1.10.246.10:FF:000005">
    <property type="entry name" value="Serum albumin"/>
    <property type="match status" value="1"/>
</dbReference>
<dbReference type="Gene3D" id="1.10.246.10">
    <property type="match status" value="6"/>
</dbReference>
<dbReference type="InterPro" id="IPR000264">
    <property type="entry name" value="ALB/AFP/VDB"/>
</dbReference>
<dbReference type="InterPro" id="IPR020858">
    <property type="entry name" value="Serum_albumin-like"/>
</dbReference>
<dbReference type="InterPro" id="IPR021177">
    <property type="entry name" value="Serum_albumin/AFP/Afamin"/>
</dbReference>
<dbReference type="InterPro" id="IPR020857">
    <property type="entry name" value="Serum_albumin_CS"/>
</dbReference>
<dbReference type="InterPro" id="IPR014760">
    <property type="entry name" value="Serum_albumin_N"/>
</dbReference>
<dbReference type="PANTHER" id="PTHR11385:SF15">
    <property type="entry name" value="ALBUMIN"/>
    <property type="match status" value="1"/>
</dbReference>
<dbReference type="PANTHER" id="PTHR11385">
    <property type="entry name" value="SERUM ALBUMIN-RELATED"/>
    <property type="match status" value="1"/>
</dbReference>
<dbReference type="Pfam" id="PF00273">
    <property type="entry name" value="Serum_albumin"/>
    <property type="match status" value="3"/>
</dbReference>
<dbReference type="PIRSF" id="PIRSF002520">
    <property type="entry name" value="Serum_albumin_subgroup"/>
    <property type="match status" value="1"/>
</dbReference>
<dbReference type="PRINTS" id="PR00803">
    <property type="entry name" value="AFETOPROTEIN"/>
</dbReference>
<dbReference type="PRINTS" id="PR00802">
    <property type="entry name" value="SERUMALBUMIN"/>
</dbReference>
<dbReference type="SMART" id="SM00103">
    <property type="entry name" value="ALBUMIN"/>
    <property type="match status" value="3"/>
</dbReference>
<dbReference type="SUPFAM" id="SSF48552">
    <property type="entry name" value="Serum albumin-like"/>
    <property type="match status" value="3"/>
</dbReference>
<dbReference type="PROSITE" id="PS00212">
    <property type="entry name" value="ALBUMIN_1"/>
    <property type="match status" value="3"/>
</dbReference>
<dbReference type="PROSITE" id="PS51438">
    <property type="entry name" value="ALBUMIN_2"/>
    <property type="match status" value="3"/>
</dbReference>
<feature type="signal peptide" evidence="5">
    <location>
        <begin position="1"/>
        <end position="18"/>
    </location>
</feature>
<feature type="propeptide" id="PRO_0000001081" evidence="3">
    <location>
        <begin position="19"/>
        <end position="24"/>
    </location>
</feature>
<feature type="chain" id="PRO_0000001082" description="Albumin">
    <location>
        <begin position="25"/>
        <end position="607"/>
    </location>
</feature>
<feature type="domain" description="Albumin 1" evidence="6">
    <location>
        <begin position="19"/>
        <end position="209"/>
    </location>
</feature>
<feature type="domain" description="Albumin 2" evidence="6">
    <location>
        <begin position="210"/>
        <end position="402"/>
    </location>
</feature>
<feature type="domain" description="Albumin 3" evidence="6">
    <location>
        <begin position="403"/>
        <end position="600"/>
    </location>
</feature>
<feature type="binding site" evidence="3">
    <location>
        <position position="27"/>
    </location>
    <ligand>
        <name>Cu cation</name>
        <dbReference type="ChEBI" id="CHEBI:23378"/>
    </ligand>
</feature>
<feature type="binding site" evidence="2">
    <location>
        <position position="30"/>
    </location>
    <ligand>
        <name>Ca(2+)</name>
        <dbReference type="ChEBI" id="CHEBI:29108"/>
        <label>1</label>
    </ligand>
</feature>
<feature type="binding site" evidence="2">
    <location>
        <position position="37"/>
    </location>
    <ligand>
        <name>Ca(2+)</name>
        <dbReference type="ChEBI" id="CHEBI:29108"/>
        <label>2</label>
    </ligand>
</feature>
<feature type="binding site" evidence="1">
    <location>
        <position position="91"/>
    </location>
    <ligand>
        <name>Zn(2+)</name>
        <dbReference type="ChEBI" id="CHEBI:29105"/>
    </ligand>
</feature>
<feature type="binding site" evidence="2">
    <location>
        <position position="267"/>
    </location>
    <ligand>
        <name>Ca(2+)</name>
        <dbReference type="ChEBI" id="CHEBI:29108"/>
        <label>1</label>
    </ligand>
</feature>
<feature type="binding site" evidence="1">
    <location>
        <position position="270"/>
    </location>
    <ligand>
        <name>Zn(2+)</name>
        <dbReference type="ChEBI" id="CHEBI:29105"/>
    </ligand>
</feature>
<feature type="binding site" evidence="2">
    <location>
        <position position="272"/>
    </location>
    <ligand>
        <name>Ca(2+)</name>
        <dbReference type="ChEBI" id="CHEBI:29108"/>
        <label>1</label>
    </ligand>
</feature>
<feature type="binding site" evidence="1">
    <location>
        <position position="272"/>
    </location>
    <ligand>
        <name>Zn(2+)</name>
        <dbReference type="ChEBI" id="CHEBI:29105"/>
    </ligand>
</feature>
<feature type="binding site" evidence="2">
    <location>
        <position position="275"/>
    </location>
    <ligand>
        <name>Ca(2+)</name>
        <dbReference type="ChEBI" id="CHEBI:29108"/>
        <label>1</label>
    </ligand>
</feature>
<feature type="binding site" evidence="2">
    <location>
        <position position="278"/>
    </location>
    <ligand>
        <name>Ca(2+)</name>
        <dbReference type="ChEBI" id="CHEBI:29108"/>
        <label>2</label>
    </ligand>
</feature>
<feature type="binding site" evidence="2">
    <location>
        <position position="282"/>
    </location>
    <ligand>
        <name>Ca(2+)</name>
        <dbReference type="ChEBI" id="CHEBI:29108"/>
        <label>2</label>
    </ligand>
</feature>
<feature type="modified residue" description="Phosphoserine" evidence="1">
    <location>
        <position position="29"/>
    </location>
</feature>
<feature type="modified residue" description="Phosphoserine" evidence="1">
    <location>
        <position position="82"/>
    </location>
</feature>
<feature type="modified residue" description="Phosphoserine" evidence="1">
    <location>
        <position position="89"/>
    </location>
</feature>
<feature type="modified residue" description="Phosphothreonine" evidence="1">
    <location>
        <position position="107"/>
    </location>
</feature>
<feature type="modified residue" description="N6-succinyllysine" evidence="4">
    <location>
        <position position="228"/>
    </location>
</feature>
<feature type="modified residue" description="Phosphoserine" evidence="4">
    <location>
        <position position="296"/>
    </location>
</feature>
<feature type="modified residue" description="Phosphoserine" evidence="1">
    <location>
        <position position="442"/>
    </location>
</feature>
<feature type="modified residue" description="Phosphothreonine" evidence="1">
    <location>
        <position position="443"/>
    </location>
</feature>
<feature type="modified residue" description="Phosphothreonine" evidence="1">
    <location>
        <position position="445"/>
    </location>
</feature>
<feature type="modified residue" description="N6-succinyllysine" evidence="4">
    <location>
        <position position="459"/>
    </location>
</feature>
<feature type="modified residue" description="Phosphoserine" evidence="1">
    <location>
        <position position="512"/>
    </location>
</feature>
<feature type="modified residue" description="N6-methyllysine" evidence="1">
    <location>
        <position position="557"/>
    </location>
</feature>
<feature type="modified residue" description="Phosphothreonine" evidence="3">
    <location>
        <position position="569"/>
    </location>
</feature>
<feature type="modified residue" description="N6-succinyllysine" evidence="4">
    <location>
        <position position="587"/>
    </location>
</feature>
<feature type="disulfide bond" evidence="6">
    <location>
        <begin position="77"/>
        <end position="86"/>
    </location>
</feature>
<feature type="disulfide bond" evidence="6">
    <location>
        <begin position="99"/>
        <end position="115"/>
    </location>
</feature>
<feature type="disulfide bond" evidence="6">
    <location>
        <begin position="114"/>
        <end position="125"/>
    </location>
</feature>
<feature type="disulfide bond" evidence="6">
    <location>
        <begin position="147"/>
        <end position="192"/>
    </location>
</feature>
<feature type="disulfide bond" evidence="6">
    <location>
        <begin position="191"/>
        <end position="200"/>
    </location>
</feature>
<feature type="disulfide bond" evidence="6">
    <location>
        <begin position="223"/>
        <end position="269"/>
    </location>
</feature>
<feature type="disulfide bond" evidence="6">
    <location>
        <begin position="268"/>
        <end position="276"/>
    </location>
</feature>
<feature type="disulfide bond" evidence="6">
    <location>
        <begin position="288"/>
        <end position="302"/>
    </location>
</feature>
<feature type="disulfide bond" evidence="6">
    <location>
        <begin position="301"/>
        <end position="312"/>
    </location>
</feature>
<feature type="disulfide bond" evidence="6">
    <location>
        <begin position="339"/>
        <end position="384"/>
    </location>
</feature>
<feature type="disulfide bond" evidence="6">
    <location>
        <begin position="383"/>
        <end position="392"/>
    </location>
</feature>
<feature type="disulfide bond" evidence="6">
    <location>
        <begin position="415"/>
        <end position="461"/>
    </location>
</feature>
<feature type="disulfide bond" evidence="6">
    <location>
        <begin position="460"/>
        <end position="471"/>
    </location>
</feature>
<feature type="disulfide bond" evidence="6">
    <location>
        <begin position="484"/>
        <end position="500"/>
    </location>
</feature>
<feature type="disulfide bond" evidence="6">
    <location>
        <begin position="499"/>
        <end position="510"/>
    </location>
</feature>
<feature type="disulfide bond" evidence="6">
    <location>
        <begin position="537"/>
        <end position="582"/>
    </location>
</feature>
<feature type="disulfide bond" evidence="6">
    <location>
        <begin position="581"/>
        <end position="590"/>
    </location>
</feature>
<feature type="helix" evidence="7">
    <location>
        <begin position="26"/>
        <end position="28"/>
    </location>
</feature>
<feature type="helix" evidence="9">
    <location>
        <begin position="30"/>
        <end position="38"/>
    </location>
</feature>
<feature type="helix" evidence="9">
    <location>
        <begin position="40"/>
        <end position="54"/>
    </location>
</feature>
<feature type="helix" evidence="9">
    <location>
        <begin position="60"/>
        <end position="79"/>
    </location>
</feature>
<feature type="turn" evidence="9">
    <location>
        <begin position="84"/>
        <end position="87"/>
    </location>
</feature>
<feature type="helix" evidence="9">
    <location>
        <begin position="90"/>
        <end position="99"/>
    </location>
</feature>
<feature type="helix" evidence="9">
    <location>
        <begin position="104"/>
        <end position="108"/>
    </location>
</feature>
<feature type="helix" evidence="9">
    <location>
        <begin position="109"/>
        <end position="116"/>
    </location>
</feature>
<feature type="helix" evidence="9">
    <location>
        <begin position="121"/>
        <end position="128"/>
    </location>
</feature>
<feature type="helix" evidence="9">
    <location>
        <begin position="143"/>
        <end position="152"/>
    </location>
</feature>
<feature type="helix" evidence="9">
    <location>
        <begin position="154"/>
        <end position="168"/>
    </location>
</feature>
<feature type="helix" evidence="9">
    <location>
        <begin position="174"/>
        <end position="192"/>
    </location>
</feature>
<feature type="strand" evidence="9">
    <location>
        <begin position="194"/>
        <end position="196"/>
    </location>
</feature>
<feature type="helix" evidence="9">
    <location>
        <begin position="197"/>
        <end position="229"/>
    </location>
</feature>
<feature type="helix" evidence="9">
    <location>
        <begin position="231"/>
        <end position="245"/>
    </location>
</feature>
<feature type="helix" evidence="9">
    <location>
        <begin position="251"/>
        <end position="269"/>
    </location>
</feature>
<feature type="helix" evidence="9">
    <location>
        <begin position="273"/>
        <end position="289"/>
    </location>
</feature>
<feature type="helix" evidence="9">
    <location>
        <begin position="291"/>
        <end position="293"/>
    </location>
</feature>
<feature type="helix" evidence="9">
    <location>
        <begin position="296"/>
        <end position="298"/>
    </location>
</feature>
<feature type="helix" evidence="9">
    <location>
        <begin position="299"/>
        <end position="302"/>
    </location>
</feature>
<feature type="helix" evidence="9">
    <location>
        <begin position="306"/>
        <end position="314"/>
    </location>
</feature>
<feature type="helix" evidence="9">
    <location>
        <begin position="329"/>
        <end position="332"/>
    </location>
</feature>
<feature type="helix" evidence="9">
    <location>
        <begin position="338"/>
        <end position="344"/>
    </location>
</feature>
<feature type="helix" evidence="9">
    <location>
        <begin position="346"/>
        <end position="360"/>
    </location>
</feature>
<feature type="helix" evidence="9">
    <location>
        <begin position="366"/>
        <end position="383"/>
    </location>
</feature>
<feature type="strand" evidence="9">
    <location>
        <begin position="386"/>
        <end position="388"/>
    </location>
</feature>
<feature type="helix" evidence="9">
    <location>
        <begin position="389"/>
        <end position="393"/>
    </location>
</feature>
<feature type="helix" evidence="9">
    <location>
        <begin position="396"/>
        <end position="400"/>
    </location>
</feature>
<feature type="helix" evidence="9">
    <location>
        <begin position="402"/>
        <end position="437"/>
    </location>
</feature>
<feature type="helix" evidence="9">
    <location>
        <begin position="443"/>
        <end position="460"/>
    </location>
</feature>
<feature type="helix" evidence="9">
    <location>
        <begin position="465"/>
        <end position="489"/>
    </location>
</feature>
<feature type="helix" evidence="9">
    <location>
        <begin position="494"/>
        <end position="502"/>
    </location>
</feature>
<feature type="turn" evidence="8">
    <location>
        <begin position="504"/>
        <end position="506"/>
    </location>
</feature>
<feature type="helix" evidence="9">
    <location>
        <begin position="507"/>
        <end position="513"/>
    </location>
</feature>
<feature type="helix" evidence="9">
    <location>
        <begin position="527"/>
        <end position="530"/>
    </location>
</feature>
<feature type="helix" evidence="9">
    <location>
        <begin position="534"/>
        <end position="538"/>
    </location>
</feature>
<feature type="helix" evidence="9">
    <location>
        <begin position="541"/>
        <end position="558"/>
    </location>
</feature>
<feature type="helix" evidence="9">
    <location>
        <begin position="564"/>
        <end position="582"/>
    </location>
</feature>
<feature type="strand" evidence="9">
    <location>
        <begin position="584"/>
        <end position="586"/>
    </location>
</feature>
<feature type="helix" evidence="9">
    <location>
        <begin position="587"/>
        <end position="606"/>
    </location>
</feature>
<sequence>MKWVTFISLLLLFSSAYSRGVFRRDTHKSEIAHRFNDLGEENFQGLVLIAFSQYLQQCPFDEHVKLVKELTEFAKTCVADESHAGCDKSLHTLFGDELCKVATLRETYGDMADCCEKQEPERNECFLNHKDDSPDLPKLKPEPDTLCAEFKADEKKFWGKYLYEVARRHPYFYAPELLYYANKYNGVFQECCQAEDKGACLLPKIDAMREKVLASSARQRLRCASIQKFGERALKAWSVARLSQKFPKADFTDVTKIVTDLTKVHKECCHGDLLECADDRADLAKYICDHQDALSSKLKECCDKPVLEKSHCIAEVDKDAVPENLPPLTADFAEDKEVCKNYQEAKDVFLGSFLYEYSRRHPEYAVSVLLRLAKEYEATLEDCCAKEDPHACYATVFDKLKHLVDEPQNLIKKNCELFEKHGEYGFQNALIVRYTRKAPQVSTPTLVEISRSLGKVGTKCCAKPESERMPCTEDYLSLILNRLCVLHEKTPVSEKVTKCCTESLVNRRPCFSDLTLDETYVPKPFDEKFFTFHADICTLPDTEKQIKKQTALVELLKHKPKATDEQLKTVMENFVAFVDKCCAADDKEGCFVLEGPKLVASTQAALA</sequence>
<gene>
    <name type="primary">ALB</name>
</gene>
<organism>
    <name type="scientific">Ovis aries</name>
    <name type="common">Sheep</name>
    <dbReference type="NCBI Taxonomy" id="9940"/>
    <lineage>
        <taxon>Eukaryota</taxon>
        <taxon>Metazoa</taxon>
        <taxon>Chordata</taxon>
        <taxon>Craniata</taxon>
        <taxon>Vertebrata</taxon>
        <taxon>Euteleostomi</taxon>
        <taxon>Mammalia</taxon>
        <taxon>Eutheria</taxon>
        <taxon>Laurasiatheria</taxon>
        <taxon>Artiodactyla</taxon>
        <taxon>Ruminantia</taxon>
        <taxon>Pecora</taxon>
        <taxon>Bovidae</taxon>
        <taxon>Caprinae</taxon>
        <taxon>Ovis</taxon>
    </lineage>
</organism>
<accession>P14639</accession>